<organism>
    <name type="scientific">Bradyrhizobium sp. (strain BTAi1 / ATCC BAA-1182)</name>
    <dbReference type="NCBI Taxonomy" id="288000"/>
    <lineage>
        <taxon>Bacteria</taxon>
        <taxon>Pseudomonadati</taxon>
        <taxon>Pseudomonadota</taxon>
        <taxon>Alphaproteobacteria</taxon>
        <taxon>Hyphomicrobiales</taxon>
        <taxon>Nitrobacteraceae</taxon>
        <taxon>Bradyrhizobium</taxon>
    </lineage>
</organism>
<comment type="function">
    <text evidence="1">ATP-dependent specificity component of the Clp protease. It directs the protease to specific substrates. Can perform chaperone functions in the absence of ClpP.</text>
</comment>
<comment type="subunit">
    <text evidence="1">Component of the ClpX-ClpP complex. Forms a hexameric ring that, in the presence of ATP, binds to fourteen ClpP subunits assembled into a disk-like structure with a central cavity, resembling the structure of eukaryotic proteasomes.</text>
</comment>
<comment type="similarity">
    <text evidence="1">Belongs to the ClpX chaperone family.</text>
</comment>
<sequence>MSKVGTSDSKNTLYCSFCGKSQHEVRKLIAGPTVFICDECVELCMDIIREENKSSLVKSRDGIPTPKEICKVLDDYVIGQNHAKKVLSVAVHNHYKRLNHQTKHSDVELAKSNILLIGPTGSGKTLLAQTLARILDVPFTMADATTLTEAGYVGEDVENIILKLLQAADYNVERAQRGIVYIDEIDKISRKSDNPSITRDVSGEGVQQALLKIMEGTVASVPPQGGRKHPQQEFLQVDTTNILFICGGAFSGLEKIISARGRSTSIGFAAQVLAPEDRRTGEIFRHVEPEDLLKYGLIPEFVGRLPVVATLEDLDENSLKKILTEPKNALVKQYQRLFEMENIELTFADEALGAVARKAIERKTGARGLRSILESILLETMFDLPGLEGVEEVVISREVVEGTARPLYIYADRSDRAVESSASA</sequence>
<feature type="chain" id="PRO_1000024521" description="ATP-dependent Clp protease ATP-binding subunit ClpX">
    <location>
        <begin position="1"/>
        <end position="424"/>
    </location>
</feature>
<feature type="domain" description="ClpX-type ZB" evidence="2">
    <location>
        <begin position="3"/>
        <end position="56"/>
    </location>
</feature>
<feature type="binding site" evidence="2">
    <location>
        <position position="15"/>
    </location>
    <ligand>
        <name>Zn(2+)</name>
        <dbReference type="ChEBI" id="CHEBI:29105"/>
    </ligand>
</feature>
<feature type="binding site" evidence="2">
    <location>
        <position position="18"/>
    </location>
    <ligand>
        <name>Zn(2+)</name>
        <dbReference type="ChEBI" id="CHEBI:29105"/>
    </ligand>
</feature>
<feature type="binding site" evidence="2">
    <location>
        <position position="37"/>
    </location>
    <ligand>
        <name>Zn(2+)</name>
        <dbReference type="ChEBI" id="CHEBI:29105"/>
    </ligand>
</feature>
<feature type="binding site" evidence="2">
    <location>
        <position position="40"/>
    </location>
    <ligand>
        <name>Zn(2+)</name>
        <dbReference type="ChEBI" id="CHEBI:29105"/>
    </ligand>
</feature>
<feature type="binding site" evidence="1">
    <location>
        <begin position="119"/>
        <end position="126"/>
    </location>
    <ligand>
        <name>ATP</name>
        <dbReference type="ChEBI" id="CHEBI:30616"/>
    </ligand>
</feature>
<keyword id="KW-0067">ATP-binding</keyword>
<keyword id="KW-0143">Chaperone</keyword>
<keyword id="KW-0479">Metal-binding</keyword>
<keyword id="KW-0547">Nucleotide-binding</keyword>
<keyword id="KW-1185">Reference proteome</keyword>
<keyword id="KW-0862">Zinc</keyword>
<name>CLPX_BRASB</name>
<gene>
    <name evidence="1" type="primary">clpX</name>
    <name type="ordered locus">BBta_4571</name>
</gene>
<accession>A5EKA7</accession>
<dbReference type="EMBL" id="CP000494">
    <property type="protein sequence ID" value="ABQ36601.1"/>
    <property type="molecule type" value="Genomic_DNA"/>
</dbReference>
<dbReference type="RefSeq" id="WP_012044595.1">
    <property type="nucleotide sequence ID" value="NC_009485.1"/>
</dbReference>
<dbReference type="SMR" id="A5EKA7"/>
<dbReference type="STRING" id="288000.BBta_4571"/>
<dbReference type="KEGG" id="bbt:BBta_4571"/>
<dbReference type="eggNOG" id="COG1219">
    <property type="taxonomic scope" value="Bacteria"/>
</dbReference>
<dbReference type="HOGENOM" id="CLU_014218_8_2_5"/>
<dbReference type="OrthoDB" id="9804062at2"/>
<dbReference type="Proteomes" id="UP000000246">
    <property type="component" value="Chromosome"/>
</dbReference>
<dbReference type="GO" id="GO:0009376">
    <property type="term" value="C:HslUV protease complex"/>
    <property type="evidence" value="ECO:0007669"/>
    <property type="project" value="TreeGrafter"/>
</dbReference>
<dbReference type="GO" id="GO:0005524">
    <property type="term" value="F:ATP binding"/>
    <property type="evidence" value="ECO:0007669"/>
    <property type="project" value="UniProtKB-UniRule"/>
</dbReference>
<dbReference type="GO" id="GO:0016887">
    <property type="term" value="F:ATP hydrolysis activity"/>
    <property type="evidence" value="ECO:0007669"/>
    <property type="project" value="InterPro"/>
</dbReference>
<dbReference type="GO" id="GO:0140662">
    <property type="term" value="F:ATP-dependent protein folding chaperone"/>
    <property type="evidence" value="ECO:0007669"/>
    <property type="project" value="InterPro"/>
</dbReference>
<dbReference type="GO" id="GO:0046983">
    <property type="term" value="F:protein dimerization activity"/>
    <property type="evidence" value="ECO:0007669"/>
    <property type="project" value="InterPro"/>
</dbReference>
<dbReference type="GO" id="GO:0051082">
    <property type="term" value="F:unfolded protein binding"/>
    <property type="evidence" value="ECO:0007669"/>
    <property type="project" value="UniProtKB-UniRule"/>
</dbReference>
<dbReference type="GO" id="GO:0008270">
    <property type="term" value="F:zinc ion binding"/>
    <property type="evidence" value="ECO:0007669"/>
    <property type="project" value="InterPro"/>
</dbReference>
<dbReference type="GO" id="GO:0051301">
    <property type="term" value="P:cell division"/>
    <property type="evidence" value="ECO:0007669"/>
    <property type="project" value="TreeGrafter"/>
</dbReference>
<dbReference type="GO" id="GO:0051603">
    <property type="term" value="P:proteolysis involved in protein catabolic process"/>
    <property type="evidence" value="ECO:0007669"/>
    <property type="project" value="TreeGrafter"/>
</dbReference>
<dbReference type="CDD" id="cd19497">
    <property type="entry name" value="RecA-like_ClpX"/>
    <property type="match status" value="1"/>
</dbReference>
<dbReference type="FunFam" id="1.10.8.60:FF:000002">
    <property type="entry name" value="ATP-dependent Clp protease ATP-binding subunit ClpX"/>
    <property type="match status" value="1"/>
</dbReference>
<dbReference type="FunFam" id="3.40.50.300:FF:000005">
    <property type="entry name" value="ATP-dependent Clp protease ATP-binding subunit ClpX"/>
    <property type="match status" value="1"/>
</dbReference>
<dbReference type="Gene3D" id="1.10.8.60">
    <property type="match status" value="1"/>
</dbReference>
<dbReference type="Gene3D" id="6.20.220.10">
    <property type="entry name" value="ClpX chaperone, C4-type zinc finger domain"/>
    <property type="match status" value="1"/>
</dbReference>
<dbReference type="Gene3D" id="3.40.50.300">
    <property type="entry name" value="P-loop containing nucleotide triphosphate hydrolases"/>
    <property type="match status" value="1"/>
</dbReference>
<dbReference type="HAMAP" id="MF_00175">
    <property type="entry name" value="ClpX"/>
    <property type="match status" value="1"/>
</dbReference>
<dbReference type="InterPro" id="IPR003593">
    <property type="entry name" value="AAA+_ATPase"/>
</dbReference>
<dbReference type="InterPro" id="IPR050052">
    <property type="entry name" value="ATP-dep_Clp_protease_ClpX"/>
</dbReference>
<dbReference type="InterPro" id="IPR003959">
    <property type="entry name" value="ATPase_AAA_core"/>
</dbReference>
<dbReference type="InterPro" id="IPR019489">
    <property type="entry name" value="Clp_ATPase_C"/>
</dbReference>
<dbReference type="InterPro" id="IPR004487">
    <property type="entry name" value="Clp_protease_ATP-bd_su_ClpX"/>
</dbReference>
<dbReference type="InterPro" id="IPR046425">
    <property type="entry name" value="ClpX_bact"/>
</dbReference>
<dbReference type="InterPro" id="IPR027417">
    <property type="entry name" value="P-loop_NTPase"/>
</dbReference>
<dbReference type="InterPro" id="IPR010603">
    <property type="entry name" value="Znf_CppX_C4"/>
</dbReference>
<dbReference type="InterPro" id="IPR038366">
    <property type="entry name" value="Znf_CppX_C4_sf"/>
</dbReference>
<dbReference type="NCBIfam" id="TIGR00382">
    <property type="entry name" value="clpX"/>
    <property type="match status" value="1"/>
</dbReference>
<dbReference type="NCBIfam" id="NF003745">
    <property type="entry name" value="PRK05342.1"/>
    <property type="match status" value="1"/>
</dbReference>
<dbReference type="PANTHER" id="PTHR48102:SF7">
    <property type="entry name" value="ATP-DEPENDENT CLP PROTEASE ATP-BINDING SUBUNIT CLPX-LIKE, MITOCHONDRIAL"/>
    <property type="match status" value="1"/>
</dbReference>
<dbReference type="PANTHER" id="PTHR48102">
    <property type="entry name" value="ATP-DEPENDENT CLP PROTEASE ATP-BINDING SUBUNIT CLPX-LIKE, MITOCHONDRIAL-RELATED"/>
    <property type="match status" value="1"/>
</dbReference>
<dbReference type="Pfam" id="PF07724">
    <property type="entry name" value="AAA_2"/>
    <property type="match status" value="1"/>
</dbReference>
<dbReference type="Pfam" id="PF10431">
    <property type="entry name" value="ClpB_D2-small"/>
    <property type="match status" value="1"/>
</dbReference>
<dbReference type="Pfam" id="PF06689">
    <property type="entry name" value="zf-C4_ClpX"/>
    <property type="match status" value="1"/>
</dbReference>
<dbReference type="SMART" id="SM00382">
    <property type="entry name" value="AAA"/>
    <property type="match status" value="1"/>
</dbReference>
<dbReference type="SMART" id="SM01086">
    <property type="entry name" value="ClpB_D2-small"/>
    <property type="match status" value="1"/>
</dbReference>
<dbReference type="SMART" id="SM00994">
    <property type="entry name" value="zf-C4_ClpX"/>
    <property type="match status" value="1"/>
</dbReference>
<dbReference type="SUPFAM" id="SSF57716">
    <property type="entry name" value="Glucocorticoid receptor-like (DNA-binding domain)"/>
    <property type="match status" value="1"/>
</dbReference>
<dbReference type="SUPFAM" id="SSF52540">
    <property type="entry name" value="P-loop containing nucleoside triphosphate hydrolases"/>
    <property type="match status" value="1"/>
</dbReference>
<dbReference type="PROSITE" id="PS51902">
    <property type="entry name" value="CLPX_ZB"/>
    <property type="match status" value="1"/>
</dbReference>
<protein>
    <recommendedName>
        <fullName evidence="1">ATP-dependent Clp protease ATP-binding subunit ClpX</fullName>
    </recommendedName>
</protein>
<evidence type="ECO:0000255" key="1">
    <source>
        <dbReference type="HAMAP-Rule" id="MF_00175"/>
    </source>
</evidence>
<evidence type="ECO:0000255" key="2">
    <source>
        <dbReference type="PROSITE-ProRule" id="PRU01250"/>
    </source>
</evidence>
<proteinExistence type="inferred from homology"/>
<reference key="1">
    <citation type="journal article" date="2007" name="Science">
        <title>Legumes symbioses: absence of nod genes in photosynthetic bradyrhizobia.</title>
        <authorList>
            <person name="Giraud E."/>
            <person name="Moulin L."/>
            <person name="Vallenet D."/>
            <person name="Barbe V."/>
            <person name="Cytryn E."/>
            <person name="Avarre J.-C."/>
            <person name="Jaubert M."/>
            <person name="Simon D."/>
            <person name="Cartieaux F."/>
            <person name="Prin Y."/>
            <person name="Bena G."/>
            <person name="Hannibal L."/>
            <person name="Fardoux J."/>
            <person name="Kojadinovic M."/>
            <person name="Vuillet L."/>
            <person name="Lajus A."/>
            <person name="Cruveiller S."/>
            <person name="Rouy Z."/>
            <person name="Mangenot S."/>
            <person name="Segurens B."/>
            <person name="Dossat C."/>
            <person name="Franck W.L."/>
            <person name="Chang W.-S."/>
            <person name="Saunders E."/>
            <person name="Bruce D."/>
            <person name="Richardson P."/>
            <person name="Normand P."/>
            <person name="Dreyfus B."/>
            <person name="Pignol D."/>
            <person name="Stacey G."/>
            <person name="Emerich D."/>
            <person name="Vermeglio A."/>
            <person name="Medigue C."/>
            <person name="Sadowsky M."/>
        </authorList>
    </citation>
    <scope>NUCLEOTIDE SEQUENCE [LARGE SCALE GENOMIC DNA]</scope>
    <source>
        <strain>BTAi1 / ATCC BAA-1182</strain>
    </source>
</reference>